<organism>
    <name type="scientific">Streptococcus pyogenes serotype M3 (strain ATCC BAA-595 / MGAS315)</name>
    <dbReference type="NCBI Taxonomy" id="198466"/>
    <lineage>
        <taxon>Bacteria</taxon>
        <taxon>Bacillati</taxon>
        <taxon>Bacillota</taxon>
        <taxon>Bacilli</taxon>
        <taxon>Lactobacillales</taxon>
        <taxon>Streptococcaceae</taxon>
        <taxon>Streptococcus</taxon>
    </lineage>
</organism>
<gene>
    <name type="primary">hasC2</name>
    <name type="synonym">hasC.2</name>
    <name type="ordered locus">SpyM3_0160</name>
</gene>
<sequence length="299" mass="33302">MTKVRKAIIPAAGLGTRFLPATKALAKEMLPIVDKPTIQFIVEEALKSGIEEILIVTGKSKRSIEDHFDSNFELEYNLQAKGKIELLKLVDETTSINLHFIRQSHPRGLGDAVLQAKTFVGNEPFVVMLGDDLMDITNPNVKPLTKQLIDDYEETHAATIAVMRVPHEDVSNYGIIAPQAKAVKGLYSVDTFVEKPQPQDAPSDLAIIGRYLLTPEIFSILEKQEPGAGNEVQLTDAIDTLNKTQRVFAREFKGKRYDVGDKFGFMKTSLDYALKHPQVKDDLKAYIIQLGKALEKTKP</sequence>
<feature type="chain" id="PRO_0000201373" description="UTP--glucose-1-phosphate uridylyltransferase 2">
    <location>
        <begin position="1"/>
        <end position="299"/>
    </location>
</feature>
<proteinExistence type="inferred from homology"/>
<dbReference type="EC" id="2.7.7.9"/>
<dbReference type="EMBL" id="AE014074">
    <property type="protein sequence ID" value="AAM78767.1"/>
    <property type="molecule type" value="Genomic_DNA"/>
</dbReference>
<dbReference type="SMR" id="P0DG72"/>
<dbReference type="KEGG" id="spg:SpyM3_0160"/>
<dbReference type="HOGENOM" id="CLU_029499_1_2_9"/>
<dbReference type="UniPathway" id="UPA00215"/>
<dbReference type="Proteomes" id="UP000000564">
    <property type="component" value="Chromosome"/>
</dbReference>
<dbReference type="GO" id="GO:0003983">
    <property type="term" value="F:UTP:glucose-1-phosphate uridylyltransferase activity"/>
    <property type="evidence" value="ECO:0007669"/>
    <property type="project" value="UniProtKB-EC"/>
</dbReference>
<dbReference type="GO" id="GO:0009058">
    <property type="term" value="P:biosynthetic process"/>
    <property type="evidence" value="ECO:0007669"/>
    <property type="project" value="InterPro"/>
</dbReference>
<dbReference type="GO" id="GO:0006011">
    <property type="term" value="P:UDP-alpha-D-glucose metabolic process"/>
    <property type="evidence" value="ECO:0007669"/>
    <property type="project" value="InterPro"/>
</dbReference>
<dbReference type="CDD" id="cd02541">
    <property type="entry name" value="UGPase_prokaryotic"/>
    <property type="match status" value="1"/>
</dbReference>
<dbReference type="Gene3D" id="3.90.550.10">
    <property type="entry name" value="Spore Coat Polysaccharide Biosynthesis Protein SpsA, Chain A"/>
    <property type="match status" value="1"/>
</dbReference>
<dbReference type="InterPro" id="IPR005771">
    <property type="entry name" value="GalU_uridylyltTrfase_bac/arc"/>
</dbReference>
<dbReference type="InterPro" id="IPR005835">
    <property type="entry name" value="NTP_transferase_dom"/>
</dbReference>
<dbReference type="InterPro" id="IPR029044">
    <property type="entry name" value="Nucleotide-diphossugar_trans"/>
</dbReference>
<dbReference type="NCBIfam" id="TIGR01099">
    <property type="entry name" value="galU"/>
    <property type="match status" value="1"/>
</dbReference>
<dbReference type="PANTHER" id="PTHR43197">
    <property type="entry name" value="UTP--GLUCOSE-1-PHOSPHATE URIDYLYLTRANSFERASE"/>
    <property type="match status" value="1"/>
</dbReference>
<dbReference type="PANTHER" id="PTHR43197:SF1">
    <property type="entry name" value="UTP--GLUCOSE-1-PHOSPHATE URIDYLYLTRANSFERASE"/>
    <property type="match status" value="1"/>
</dbReference>
<dbReference type="Pfam" id="PF00483">
    <property type="entry name" value="NTP_transferase"/>
    <property type="match status" value="1"/>
</dbReference>
<dbReference type="SUPFAM" id="SSF53448">
    <property type="entry name" value="Nucleotide-diphospho-sugar transferases"/>
    <property type="match status" value="1"/>
</dbReference>
<keyword id="KW-0548">Nucleotidyltransferase</keyword>
<keyword id="KW-0808">Transferase</keyword>
<protein>
    <recommendedName>
        <fullName>UTP--glucose-1-phosphate uridylyltransferase 2</fullName>
        <ecNumber>2.7.7.9</ecNumber>
    </recommendedName>
    <alternativeName>
        <fullName>Alpha-D-glucosyl-1-phosphate uridylyltransferase 2</fullName>
    </alternativeName>
    <alternativeName>
        <fullName>UDP-glucose pyrophosphorylase 2</fullName>
        <shortName>UDPGP 2</shortName>
    </alternativeName>
    <alternativeName>
        <fullName>Uridine diphosphoglucose pyrophosphorylase 2</fullName>
    </alternativeName>
</protein>
<evidence type="ECO:0000305" key="1"/>
<comment type="catalytic activity">
    <reaction>
        <text>alpha-D-glucose 1-phosphate + UTP + H(+) = UDP-alpha-D-glucose + diphosphate</text>
        <dbReference type="Rhea" id="RHEA:19889"/>
        <dbReference type="ChEBI" id="CHEBI:15378"/>
        <dbReference type="ChEBI" id="CHEBI:33019"/>
        <dbReference type="ChEBI" id="CHEBI:46398"/>
        <dbReference type="ChEBI" id="CHEBI:58601"/>
        <dbReference type="ChEBI" id="CHEBI:58885"/>
        <dbReference type="EC" id="2.7.7.9"/>
    </reaction>
</comment>
<comment type="pathway">
    <text>Carbohydrate metabolism; nucleotide-sugar metabolism.</text>
</comment>
<comment type="similarity">
    <text evidence="1">Belongs to the UDPGP type 2 family.</text>
</comment>
<reference key="1">
    <citation type="journal article" date="2002" name="Proc. Natl. Acad. Sci. U.S.A.">
        <title>Genome sequence of a serotype M3 strain of group A Streptococcus: phage-encoded toxins, the high-virulence phenotype, and clone emergence.</title>
        <authorList>
            <person name="Beres S.B."/>
            <person name="Sylva G.L."/>
            <person name="Barbian K.D."/>
            <person name="Lei B."/>
            <person name="Hoff J.S."/>
            <person name="Mammarella N.D."/>
            <person name="Liu M.-Y."/>
            <person name="Smoot J.C."/>
            <person name="Porcella S.F."/>
            <person name="Parkins L.D."/>
            <person name="Campbell D.S."/>
            <person name="Smith T.M."/>
            <person name="McCormick J.K."/>
            <person name="Leung D.Y.M."/>
            <person name="Schlievert P.M."/>
            <person name="Musser J.M."/>
        </authorList>
    </citation>
    <scope>NUCLEOTIDE SEQUENCE [LARGE SCALE GENOMIC DNA]</scope>
    <source>
        <strain>ATCC BAA-595 / MGAS315</strain>
    </source>
</reference>
<accession>P0DG72</accession>
<accession>P58098</accession>
<accession>P67069</accession>
<name>HASC2_STRP3</name>